<accession>Q62HR8</accession>
<keyword id="KW-0143">Chaperone</keyword>
<keyword id="KW-0963">Cytoplasm</keyword>
<keyword id="KW-0996">Nickel insertion</keyword>
<keyword id="KW-1185">Reference proteome</keyword>
<protein>
    <recommendedName>
        <fullName evidence="1">Urease accessory protein UreF</fullName>
    </recommendedName>
</protein>
<reference key="1">
    <citation type="journal article" date="2004" name="Proc. Natl. Acad. Sci. U.S.A.">
        <title>Structural flexibility in the Burkholderia mallei genome.</title>
        <authorList>
            <person name="Nierman W.C."/>
            <person name="DeShazer D."/>
            <person name="Kim H.S."/>
            <person name="Tettelin H."/>
            <person name="Nelson K.E."/>
            <person name="Feldblyum T.V."/>
            <person name="Ulrich R.L."/>
            <person name="Ronning C.M."/>
            <person name="Brinkac L.M."/>
            <person name="Daugherty S.C."/>
            <person name="Davidsen T.D."/>
            <person name="DeBoy R.T."/>
            <person name="Dimitrov G."/>
            <person name="Dodson R.J."/>
            <person name="Durkin A.S."/>
            <person name="Gwinn M.L."/>
            <person name="Haft D.H."/>
            <person name="Khouri H.M."/>
            <person name="Kolonay J.F."/>
            <person name="Madupu R."/>
            <person name="Mohammoud Y."/>
            <person name="Nelson W.C."/>
            <person name="Radune D."/>
            <person name="Romero C.M."/>
            <person name="Sarria S."/>
            <person name="Selengut J."/>
            <person name="Shamblin C."/>
            <person name="Sullivan S.A."/>
            <person name="White O."/>
            <person name="Yu Y."/>
            <person name="Zafar N."/>
            <person name="Zhou L."/>
            <person name="Fraser C.M."/>
        </authorList>
    </citation>
    <scope>NUCLEOTIDE SEQUENCE [LARGE SCALE GENOMIC DNA]</scope>
    <source>
        <strain>ATCC 23344</strain>
    </source>
</reference>
<organism>
    <name type="scientific">Burkholderia mallei (strain ATCC 23344)</name>
    <dbReference type="NCBI Taxonomy" id="243160"/>
    <lineage>
        <taxon>Bacteria</taxon>
        <taxon>Pseudomonadati</taxon>
        <taxon>Pseudomonadota</taxon>
        <taxon>Betaproteobacteria</taxon>
        <taxon>Burkholderiales</taxon>
        <taxon>Burkholderiaceae</taxon>
        <taxon>Burkholderia</taxon>
        <taxon>pseudomallei group</taxon>
    </lineage>
</organism>
<evidence type="ECO:0000255" key="1">
    <source>
        <dbReference type="HAMAP-Rule" id="MF_01385"/>
    </source>
</evidence>
<proteinExistence type="inferred from homology"/>
<sequence>MDTAELVALLHLASPALPIGAFSYSQGLEAALDAPLIRDADGARDWIASGLADVLAQGELPFLAHQLARWHAHDAAALADANDEFVASRESFELRRETEQMGWSLAQLCASLEWGDAARRATLASIPSVALPSAFAFAAAAHGATPDAALAAYAFGWVENQTAAAIKAVPLGQLAGQKIIVALREPIRDAVRRALATPPEAINTFAPQLGILSARHESQYSRLFRS</sequence>
<comment type="function">
    <text evidence="1">Required for maturation of urease via the functional incorporation of the urease nickel metallocenter.</text>
</comment>
<comment type="subunit">
    <text evidence="1">UreD, UreF and UreG form a complex that acts as a GTP-hydrolysis-dependent molecular chaperone, activating the urease apoprotein by helping to assemble the nickel containing metallocenter of UreC. The UreE protein probably delivers the nickel.</text>
</comment>
<comment type="subcellular location">
    <subcellularLocation>
        <location evidence="1">Cytoplasm</location>
    </subcellularLocation>
</comment>
<comment type="similarity">
    <text evidence="1">Belongs to the UreF family.</text>
</comment>
<gene>
    <name evidence="1" type="primary">ureF</name>
    <name type="ordered locus">BMA2186</name>
</gene>
<dbReference type="EMBL" id="CP000010">
    <property type="protein sequence ID" value="AAU50297.1"/>
    <property type="molecule type" value="Genomic_DNA"/>
</dbReference>
<dbReference type="RefSeq" id="WP_004533998.1">
    <property type="nucleotide sequence ID" value="NC_006348.1"/>
</dbReference>
<dbReference type="RefSeq" id="YP_103752.1">
    <property type="nucleotide sequence ID" value="NC_006348.1"/>
</dbReference>
<dbReference type="SMR" id="Q62HR8"/>
<dbReference type="KEGG" id="bma:BMA2186"/>
<dbReference type="PATRIC" id="fig|243160.12.peg.2255"/>
<dbReference type="eggNOG" id="COG0830">
    <property type="taxonomic scope" value="Bacteria"/>
</dbReference>
<dbReference type="HOGENOM" id="CLU_049215_2_1_4"/>
<dbReference type="Proteomes" id="UP000006693">
    <property type="component" value="Chromosome 1"/>
</dbReference>
<dbReference type="GO" id="GO:0005737">
    <property type="term" value="C:cytoplasm"/>
    <property type="evidence" value="ECO:0007669"/>
    <property type="project" value="UniProtKB-SubCell"/>
</dbReference>
<dbReference type="GO" id="GO:0016151">
    <property type="term" value="F:nickel cation binding"/>
    <property type="evidence" value="ECO:0007669"/>
    <property type="project" value="UniProtKB-UniRule"/>
</dbReference>
<dbReference type="Gene3D" id="1.10.4190.10">
    <property type="entry name" value="Urease accessory protein UreF"/>
    <property type="match status" value="1"/>
</dbReference>
<dbReference type="HAMAP" id="MF_01385">
    <property type="entry name" value="UreF"/>
    <property type="match status" value="1"/>
</dbReference>
<dbReference type="InterPro" id="IPR002639">
    <property type="entry name" value="UreF"/>
</dbReference>
<dbReference type="InterPro" id="IPR038277">
    <property type="entry name" value="UreF_sf"/>
</dbReference>
<dbReference type="PANTHER" id="PTHR33620">
    <property type="entry name" value="UREASE ACCESSORY PROTEIN F"/>
    <property type="match status" value="1"/>
</dbReference>
<dbReference type="PANTHER" id="PTHR33620:SF1">
    <property type="entry name" value="UREASE ACCESSORY PROTEIN F"/>
    <property type="match status" value="1"/>
</dbReference>
<dbReference type="Pfam" id="PF01730">
    <property type="entry name" value="UreF"/>
    <property type="match status" value="1"/>
</dbReference>
<dbReference type="PIRSF" id="PIRSF009467">
    <property type="entry name" value="Ureas_acces_UreF"/>
    <property type="match status" value="1"/>
</dbReference>
<feature type="chain" id="PRO_0000344101" description="Urease accessory protein UreF">
    <location>
        <begin position="1"/>
        <end position="226"/>
    </location>
</feature>
<name>UREF_BURMA</name>